<evidence type="ECO:0000255" key="1">
    <source>
        <dbReference type="HAMAP-Rule" id="MF_00321"/>
    </source>
</evidence>
<feature type="chain" id="PRO_1000005799" description="Probable GTP-binding protein EngB">
    <location>
        <begin position="1"/>
        <end position="198"/>
    </location>
</feature>
<feature type="domain" description="EngB-type G" evidence="1">
    <location>
        <begin position="22"/>
        <end position="195"/>
    </location>
</feature>
<feature type="binding site" evidence="1">
    <location>
        <begin position="30"/>
        <end position="37"/>
    </location>
    <ligand>
        <name>GTP</name>
        <dbReference type="ChEBI" id="CHEBI:37565"/>
    </ligand>
</feature>
<feature type="binding site" evidence="1">
    <location>
        <position position="37"/>
    </location>
    <ligand>
        <name>Mg(2+)</name>
        <dbReference type="ChEBI" id="CHEBI:18420"/>
    </ligand>
</feature>
<feature type="binding site" evidence="1">
    <location>
        <begin position="57"/>
        <end position="61"/>
    </location>
    <ligand>
        <name>GTP</name>
        <dbReference type="ChEBI" id="CHEBI:37565"/>
    </ligand>
</feature>
<feature type="binding site" evidence="1">
    <location>
        <position position="59"/>
    </location>
    <ligand>
        <name>Mg(2+)</name>
        <dbReference type="ChEBI" id="CHEBI:18420"/>
    </ligand>
</feature>
<feature type="binding site" evidence="1">
    <location>
        <begin position="75"/>
        <end position="78"/>
    </location>
    <ligand>
        <name>GTP</name>
        <dbReference type="ChEBI" id="CHEBI:37565"/>
    </ligand>
</feature>
<feature type="binding site" evidence="1">
    <location>
        <begin position="142"/>
        <end position="145"/>
    </location>
    <ligand>
        <name>GTP</name>
        <dbReference type="ChEBI" id="CHEBI:37565"/>
    </ligand>
</feature>
<feature type="binding site" evidence="1">
    <location>
        <begin position="174"/>
        <end position="176"/>
    </location>
    <ligand>
        <name>GTP</name>
        <dbReference type="ChEBI" id="CHEBI:37565"/>
    </ligand>
</feature>
<gene>
    <name evidence="1" type="primary">engB</name>
    <name type="ordered locus">BALH_4062</name>
</gene>
<accession>A0RJ86</accession>
<name>ENGB_BACAH</name>
<reference key="1">
    <citation type="journal article" date="2007" name="J. Bacteriol.">
        <title>The complete genome sequence of Bacillus thuringiensis Al Hakam.</title>
        <authorList>
            <person name="Challacombe J.F."/>
            <person name="Altherr M.R."/>
            <person name="Xie G."/>
            <person name="Bhotika S.S."/>
            <person name="Brown N."/>
            <person name="Bruce D."/>
            <person name="Campbell C.S."/>
            <person name="Campbell M.L."/>
            <person name="Chen J."/>
            <person name="Chertkov O."/>
            <person name="Cleland C."/>
            <person name="Dimitrijevic M."/>
            <person name="Doggett N.A."/>
            <person name="Fawcett J.J."/>
            <person name="Glavina T."/>
            <person name="Goodwin L.A."/>
            <person name="Green L.D."/>
            <person name="Han C.S."/>
            <person name="Hill K.K."/>
            <person name="Hitchcock P."/>
            <person name="Jackson P.J."/>
            <person name="Keim P."/>
            <person name="Kewalramani A.R."/>
            <person name="Longmire J."/>
            <person name="Lucas S."/>
            <person name="Malfatti S."/>
            <person name="Martinez D."/>
            <person name="McMurry K."/>
            <person name="Meincke L.J."/>
            <person name="Misra M."/>
            <person name="Moseman B.L."/>
            <person name="Mundt M."/>
            <person name="Munk A.C."/>
            <person name="Okinaka R.T."/>
            <person name="Parson-Quintana B."/>
            <person name="Reilly L.P."/>
            <person name="Richardson P."/>
            <person name="Robinson D.L."/>
            <person name="Saunders E."/>
            <person name="Tapia R."/>
            <person name="Tesmer J.G."/>
            <person name="Thayer N."/>
            <person name="Thompson L.S."/>
            <person name="Tice H."/>
            <person name="Ticknor L.O."/>
            <person name="Wills P.L."/>
            <person name="Gilna P."/>
            <person name="Brettin T.S."/>
        </authorList>
    </citation>
    <scope>NUCLEOTIDE SEQUENCE [LARGE SCALE GENOMIC DNA]</scope>
    <source>
        <strain>Al Hakam</strain>
    </source>
</reference>
<proteinExistence type="inferred from homology"/>
<keyword id="KW-0131">Cell cycle</keyword>
<keyword id="KW-0132">Cell division</keyword>
<keyword id="KW-0342">GTP-binding</keyword>
<keyword id="KW-0460">Magnesium</keyword>
<keyword id="KW-0479">Metal-binding</keyword>
<keyword id="KW-0547">Nucleotide-binding</keyword>
<keyword id="KW-0717">Septation</keyword>
<comment type="function">
    <text evidence="1">Necessary for normal cell division and for the maintenance of normal septation.</text>
</comment>
<comment type="cofactor">
    <cofactor evidence="1">
        <name>Mg(2+)</name>
        <dbReference type="ChEBI" id="CHEBI:18420"/>
    </cofactor>
</comment>
<comment type="similarity">
    <text evidence="1">Belongs to the TRAFAC class TrmE-Era-EngA-EngB-Septin-like GTPase superfamily. EngB GTPase family.</text>
</comment>
<dbReference type="EMBL" id="CP000485">
    <property type="protein sequence ID" value="ABK87279.1"/>
    <property type="molecule type" value="Genomic_DNA"/>
</dbReference>
<dbReference type="SMR" id="A0RJ86"/>
<dbReference type="KEGG" id="btl:BALH_4062"/>
<dbReference type="HOGENOM" id="CLU_033732_3_0_9"/>
<dbReference type="GO" id="GO:0005829">
    <property type="term" value="C:cytosol"/>
    <property type="evidence" value="ECO:0007669"/>
    <property type="project" value="TreeGrafter"/>
</dbReference>
<dbReference type="GO" id="GO:0005525">
    <property type="term" value="F:GTP binding"/>
    <property type="evidence" value="ECO:0007669"/>
    <property type="project" value="UniProtKB-UniRule"/>
</dbReference>
<dbReference type="GO" id="GO:0046872">
    <property type="term" value="F:metal ion binding"/>
    <property type="evidence" value="ECO:0007669"/>
    <property type="project" value="UniProtKB-KW"/>
</dbReference>
<dbReference type="GO" id="GO:0000917">
    <property type="term" value="P:division septum assembly"/>
    <property type="evidence" value="ECO:0007669"/>
    <property type="project" value="UniProtKB-KW"/>
</dbReference>
<dbReference type="CDD" id="cd01876">
    <property type="entry name" value="YihA_EngB"/>
    <property type="match status" value="1"/>
</dbReference>
<dbReference type="FunFam" id="3.40.50.300:FF:000098">
    <property type="entry name" value="Probable GTP-binding protein EngB"/>
    <property type="match status" value="1"/>
</dbReference>
<dbReference type="Gene3D" id="3.40.50.300">
    <property type="entry name" value="P-loop containing nucleotide triphosphate hydrolases"/>
    <property type="match status" value="1"/>
</dbReference>
<dbReference type="HAMAP" id="MF_00321">
    <property type="entry name" value="GTPase_EngB"/>
    <property type="match status" value="1"/>
</dbReference>
<dbReference type="InterPro" id="IPR030393">
    <property type="entry name" value="G_ENGB_dom"/>
</dbReference>
<dbReference type="InterPro" id="IPR006073">
    <property type="entry name" value="GTP-bd"/>
</dbReference>
<dbReference type="InterPro" id="IPR019987">
    <property type="entry name" value="GTP-bd_ribosome_bio_YsxC"/>
</dbReference>
<dbReference type="InterPro" id="IPR027417">
    <property type="entry name" value="P-loop_NTPase"/>
</dbReference>
<dbReference type="InterPro" id="IPR005225">
    <property type="entry name" value="Small_GTP-bd"/>
</dbReference>
<dbReference type="NCBIfam" id="TIGR03598">
    <property type="entry name" value="GTPase_YsxC"/>
    <property type="match status" value="1"/>
</dbReference>
<dbReference type="NCBIfam" id="TIGR00231">
    <property type="entry name" value="small_GTP"/>
    <property type="match status" value="1"/>
</dbReference>
<dbReference type="PANTHER" id="PTHR11649:SF13">
    <property type="entry name" value="ENGB-TYPE G DOMAIN-CONTAINING PROTEIN"/>
    <property type="match status" value="1"/>
</dbReference>
<dbReference type="PANTHER" id="PTHR11649">
    <property type="entry name" value="MSS1/TRME-RELATED GTP-BINDING PROTEIN"/>
    <property type="match status" value="1"/>
</dbReference>
<dbReference type="Pfam" id="PF01926">
    <property type="entry name" value="MMR_HSR1"/>
    <property type="match status" value="1"/>
</dbReference>
<dbReference type="SUPFAM" id="SSF52540">
    <property type="entry name" value="P-loop containing nucleoside triphosphate hydrolases"/>
    <property type="match status" value="1"/>
</dbReference>
<dbReference type="PROSITE" id="PS51706">
    <property type="entry name" value="G_ENGB"/>
    <property type="match status" value="1"/>
</dbReference>
<protein>
    <recommendedName>
        <fullName evidence="1">Probable GTP-binding protein EngB</fullName>
    </recommendedName>
</protein>
<organism>
    <name type="scientific">Bacillus thuringiensis (strain Al Hakam)</name>
    <dbReference type="NCBI Taxonomy" id="412694"/>
    <lineage>
        <taxon>Bacteria</taxon>
        <taxon>Bacillati</taxon>
        <taxon>Bacillota</taxon>
        <taxon>Bacilli</taxon>
        <taxon>Bacillales</taxon>
        <taxon>Bacillaceae</taxon>
        <taxon>Bacillus</taxon>
        <taxon>Bacillus cereus group</taxon>
    </lineage>
</organism>
<sequence>MKVTKADIVISAVKPEQYPDGDLPEIALAGRSNVGKSSFINKILNRKKLVRISSKPGKTQTLNFFLINEMMHFVDVPGYGYAKVSKTERAAWGKMIETYFTTREQLDAAVLVVDLRHKPTNDDVMMYDFLKHYDIPTIIIATKADKIPKGKWQKHLKVVKETLDIESGDEVVLFSSETGLGKEEAWKAIHKFTKTKNA</sequence>